<proteinExistence type="inferred from homology"/>
<feature type="signal peptide" evidence="2">
    <location>
        <begin position="1"/>
        <end position="21"/>
    </location>
</feature>
<feature type="chain" id="PRO_0000029240" description="Extracellular protease">
    <location>
        <begin position="22"/>
        <end position="346"/>
    </location>
</feature>
<feature type="active site" evidence="1">
    <location>
        <position position="297"/>
    </location>
</feature>
<feature type="binding site" evidence="1">
    <location>
        <position position="296"/>
    </location>
    <ligand>
        <name>Zn(2+)</name>
        <dbReference type="ChEBI" id="CHEBI:29105"/>
        <note>catalytic</note>
    </ligand>
</feature>
<feature type="binding site" evidence="1">
    <location>
        <position position="300"/>
    </location>
    <ligand>
        <name>Zn(2+)</name>
        <dbReference type="ChEBI" id="CHEBI:29105"/>
        <note>catalytic</note>
    </ligand>
</feature>
<feature type="binding site" evidence="1">
    <location>
        <position position="309"/>
    </location>
    <ligand>
        <name>Zn(2+)</name>
        <dbReference type="ChEBI" id="CHEBI:29105"/>
        <note>catalytic</note>
    </ligand>
</feature>
<keyword id="KW-0378">Hydrolase</keyword>
<keyword id="KW-0479">Metal-binding</keyword>
<keyword id="KW-0482">Metalloprotease</keyword>
<keyword id="KW-0645">Protease</keyword>
<keyword id="KW-0732">Signal</keyword>
<keyword id="KW-0862">Zinc</keyword>
<comment type="function">
    <text evidence="3">Heat-labile protease.</text>
</comment>
<comment type="cofactor">
    <cofactor evidence="1">
        <name>Zn(2+)</name>
        <dbReference type="ChEBI" id="CHEBI:29105"/>
    </cofactor>
    <text evidence="1">Binds 1 zinc ion per subunit.</text>
</comment>
<comment type="similarity">
    <text evidence="5">Belongs to the peptidase M35 family.</text>
</comment>
<name>EPRA1_AERHY</name>
<protein>
    <recommendedName>
        <fullName evidence="4">Extracellular protease</fullName>
        <ecNumber evidence="5">3.4.24.-</ecNumber>
    </recommendedName>
</protein>
<dbReference type="EC" id="3.4.24.-" evidence="5"/>
<dbReference type="EMBL" id="U93600">
    <property type="protein sequence ID" value="AAB88221.1"/>
    <property type="molecule type" value="Genomic_DNA"/>
</dbReference>
<dbReference type="SMR" id="O05485"/>
<dbReference type="MEROPS" id="M35.003"/>
<dbReference type="eggNOG" id="COG4104">
    <property type="taxonomic scope" value="Bacteria"/>
</dbReference>
<dbReference type="GO" id="GO:0046872">
    <property type="term" value="F:metal ion binding"/>
    <property type="evidence" value="ECO:0007669"/>
    <property type="project" value="UniProtKB-KW"/>
</dbReference>
<dbReference type="GO" id="GO:0004222">
    <property type="term" value="F:metalloendopeptidase activity"/>
    <property type="evidence" value="ECO:0007669"/>
    <property type="project" value="InterPro"/>
</dbReference>
<dbReference type="GO" id="GO:0006508">
    <property type="term" value="P:proteolysis"/>
    <property type="evidence" value="ECO:0007669"/>
    <property type="project" value="UniProtKB-KW"/>
</dbReference>
<dbReference type="CDD" id="cd11306">
    <property type="entry name" value="M35_peptidyl-Lys"/>
    <property type="match status" value="1"/>
</dbReference>
<dbReference type="Gene3D" id="2.60.40.2970">
    <property type="match status" value="1"/>
</dbReference>
<dbReference type="Gene3D" id="3.40.390.10">
    <property type="entry name" value="Collagenase (Catalytic Domain)"/>
    <property type="match status" value="1"/>
</dbReference>
<dbReference type="InterPro" id="IPR050414">
    <property type="entry name" value="Fungal_M35_metalloproteases"/>
</dbReference>
<dbReference type="InterPro" id="IPR029463">
    <property type="entry name" value="Lys_MEP"/>
</dbReference>
<dbReference type="InterPro" id="IPR034115">
    <property type="entry name" value="M35_peptidyl-Lys"/>
</dbReference>
<dbReference type="InterPro" id="IPR024079">
    <property type="entry name" value="MetalloPept_cat_dom_sf"/>
</dbReference>
<dbReference type="PANTHER" id="PTHR37016">
    <property type="match status" value="1"/>
</dbReference>
<dbReference type="PANTHER" id="PTHR37016:SF3">
    <property type="entry name" value="NEUTRAL PROTEASE 2-RELATED"/>
    <property type="match status" value="1"/>
</dbReference>
<dbReference type="Pfam" id="PF14521">
    <property type="entry name" value="Aspzincin_M35"/>
    <property type="match status" value="1"/>
</dbReference>
<dbReference type="SMART" id="SM01351">
    <property type="entry name" value="Aspzincin_M35"/>
    <property type="match status" value="1"/>
</dbReference>
<dbReference type="SUPFAM" id="SSF55486">
    <property type="entry name" value="Metalloproteases ('zincins'), catalytic domain"/>
    <property type="match status" value="1"/>
</dbReference>
<gene>
    <name evidence="4" type="primary">eprA1</name>
</gene>
<sequence>MMKATPIALLLAGVLASPLCAAGLDARLTLVEGSTDDVRVNLTLTNTGEKPVRLLKWQLPGSEDAPLFQVERDGQPVDYEGALIKRAAPSDKDYQLLKAGQSLTVQAEVSGLYDMSAQGQYSIRYLLPTVAQEGKAAKAKQAQASESNAVTLWVDGVSDDRVLAKAAVAEPQAVSASVSFSGRCTNTQKSDILAALDAASGIANNSSSYLAVDKPNGQRYRSWFGAYDATRWNQAETNFSKIKDAIDNKPLTFDCGCKQSYFAYVYPDQPYKVYLCKSFWTAPVTGTDSRAGTIVHELSHFNVVAGTDDLGYGQANARNLASTDPQKALNNADNHEYFAENTPSEN</sequence>
<accession>O05485</accession>
<organism>
    <name type="scientific">Aeromonas hydrophila</name>
    <dbReference type="NCBI Taxonomy" id="644"/>
    <lineage>
        <taxon>Bacteria</taxon>
        <taxon>Pseudomonadati</taxon>
        <taxon>Pseudomonadota</taxon>
        <taxon>Gammaproteobacteria</taxon>
        <taxon>Aeromonadales</taxon>
        <taxon>Aeromonadaceae</taxon>
        <taxon>Aeromonas</taxon>
    </lineage>
</organism>
<reference key="1">
    <citation type="journal article" date="1997" name="Gene">
        <title>Cloning and sequence analysis of the gene (eprA1) encoding an extracellular protease from Aeromonas hydrophila.</title>
        <authorList>
            <person name="Chang T.M."/>
            <person name="Liu C.C."/>
            <person name="Chang M.C."/>
        </authorList>
    </citation>
    <scope>NUCLEOTIDE SEQUENCE [GENOMIC DNA]</scope>
    <scope>FUNCTION</scope>
    <source>
        <strain>Ah1</strain>
    </source>
</reference>
<evidence type="ECO:0000250" key="1">
    <source>
        <dbReference type="UniProtKB" id="P81054"/>
    </source>
</evidence>
<evidence type="ECO:0000255" key="2"/>
<evidence type="ECO:0000269" key="3">
    <source>
    </source>
</evidence>
<evidence type="ECO:0000303" key="4">
    <source>
    </source>
</evidence>
<evidence type="ECO:0000305" key="5"/>